<feature type="chain" id="PRO_0000114204" description="Chromosomal replication initiator protein DnaA">
    <location>
        <begin position="1"/>
        <end position="457"/>
    </location>
</feature>
<feature type="region of interest" description="Domain I, interacts with DnaA modulators" evidence="1">
    <location>
        <begin position="1"/>
        <end position="81"/>
    </location>
</feature>
<feature type="region of interest" description="Domain II" evidence="1">
    <location>
        <begin position="81"/>
        <end position="119"/>
    </location>
</feature>
<feature type="region of interest" description="Domain III, AAA+ region" evidence="1">
    <location>
        <begin position="120"/>
        <end position="337"/>
    </location>
</feature>
<feature type="region of interest" description="Domain IV, binds dsDNA" evidence="1">
    <location>
        <begin position="338"/>
        <end position="457"/>
    </location>
</feature>
<feature type="binding site" evidence="1">
    <location>
        <position position="165"/>
    </location>
    <ligand>
        <name>ATP</name>
        <dbReference type="ChEBI" id="CHEBI:30616"/>
    </ligand>
</feature>
<feature type="binding site" evidence="1">
    <location>
        <position position="167"/>
    </location>
    <ligand>
        <name>ATP</name>
        <dbReference type="ChEBI" id="CHEBI:30616"/>
    </ligand>
</feature>
<feature type="binding site" evidence="1">
    <location>
        <position position="168"/>
    </location>
    <ligand>
        <name>ATP</name>
        <dbReference type="ChEBI" id="CHEBI:30616"/>
    </ligand>
</feature>
<feature type="binding site" evidence="1">
    <location>
        <position position="169"/>
    </location>
    <ligand>
        <name>ATP</name>
        <dbReference type="ChEBI" id="CHEBI:30616"/>
    </ligand>
</feature>
<organism>
    <name type="scientific">Mannheimia succiniciproducens (strain KCTC 0769BP / MBEL55E)</name>
    <dbReference type="NCBI Taxonomy" id="221988"/>
    <lineage>
        <taxon>Bacteria</taxon>
        <taxon>Pseudomonadati</taxon>
        <taxon>Pseudomonadota</taxon>
        <taxon>Gammaproteobacteria</taxon>
        <taxon>Pasteurellales</taxon>
        <taxon>Pasteurellaceae</taxon>
        <taxon>Basfia</taxon>
    </lineage>
</organism>
<name>DNAA_MANSM</name>
<protein>
    <recommendedName>
        <fullName evidence="1">Chromosomal replication initiator protein DnaA</fullName>
    </recommendedName>
</protein>
<keyword id="KW-0067">ATP-binding</keyword>
<keyword id="KW-0963">Cytoplasm</keyword>
<keyword id="KW-0235">DNA replication</keyword>
<keyword id="KW-0238">DNA-binding</keyword>
<keyword id="KW-0446">Lipid-binding</keyword>
<keyword id="KW-0547">Nucleotide-binding</keyword>
<sequence>MERDLSQLWQNCLLQLQDQISSSDFGLWLRPLQADTSMPNTIVLYASNMFVKSWVENNYLAQITKIAQDLSNNTDLVIKVQEGSKPAARKVVAQQEIANTPVQHSAPMPENEPQAAFRSNLNQHHLFENFVEGKSNQLARAVGQKVANRPGDKSANPLFLYGGTGLGKTHLLHAVGNGIIAGNSNARVVYIHAERFVQEYVKALKAERIENFKKFYRSLDALLIDDIQFFAGKDGTQEEFFNTFNSLFEGEKQIILTSDRYPREIEKIDDRLKSRFSWGLSIAIEPPDLETRVAILMKKAEEKNIYLPEEVAFFIGQKLRTNVRELEGALNRVHANADFTGKAITIDFVRETLKDMLALQDKLVTVENIQKMVAEYYRIKVSDLKSKNRSRSIARPRQLAMALAKELTNRSLPEIGKAFGDRDHTTVLHACRTIAALRDDDNNIQEDWSNLIRTLSA</sequence>
<reference key="1">
    <citation type="journal article" date="2004" name="Nat. Biotechnol.">
        <title>The genome sequence of the capnophilic rumen bacterium Mannheimia succiniciproducens.</title>
        <authorList>
            <person name="Hong S.H."/>
            <person name="Kim J.S."/>
            <person name="Lee S.Y."/>
            <person name="In Y.H."/>
            <person name="Choi S.S."/>
            <person name="Rih J.-K."/>
            <person name="Kim C.H."/>
            <person name="Jeong H."/>
            <person name="Hur C.G."/>
            <person name="Kim J.J."/>
        </authorList>
    </citation>
    <scope>NUCLEOTIDE SEQUENCE [LARGE SCALE GENOMIC DNA]</scope>
    <source>
        <strain>KCTC 0769BP / MBEL55E</strain>
    </source>
</reference>
<accession>Q65VB8</accession>
<proteinExistence type="inferred from homology"/>
<evidence type="ECO:0000255" key="1">
    <source>
        <dbReference type="HAMAP-Rule" id="MF_00377"/>
    </source>
</evidence>
<comment type="function">
    <text evidence="1">Plays an essential role in the initiation and regulation of chromosomal replication. ATP-DnaA binds to the origin of replication (oriC) to initiate formation of the DNA replication initiation complex once per cell cycle. Binds the DnaA box (a 9 base pair repeat at the origin) and separates the double-stranded (ds)DNA. Forms a right-handed helical filament on oriC DNA; dsDNA binds to the exterior of the filament while single-stranded (ss)DNA is stabiized in the filament's interior. The ATP-DnaA-oriC complex binds and stabilizes one strand of the AT-rich DNA unwinding element (DUE), permitting loading of DNA polymerase. After initiation quickly degrades to an ADP-DnaA complex that is not apt for DNA replication. Binds acidic phospholipids.</text>
</comment>
<comment type="subunit">
    <text evidence="1">Oligomerizes as a right-handed, spiral filament on DNA at oriC.</text>
</comment>
<comment type="subcellular location">
    <subcellularLocation>
        <location evidence="1">Cytoplasm</location>
    </subcellularLocation>
</comment>
<comment type="domain">
    <text evidence="1">Domain I is involved in oligomerization and binding regulators, domain II is flexibile and of varying length in different bacteria, domain III forms the AAA+ region, while domain IV binds dsDNA.</text>
</comment>
<comment type="similarity">
    <text evidence="1">Belongs to the DnaA family.</text>
</comment>
<dbReference type="EMBL" id="AE016827">
    <property type="protein sequence ID" value="AAU37092.1"/>
    <property type="molecule type" value="Genomic_DNA"/>
</dbReference>
<dbReference type="RefSeq" id="WP_011199665.1">
    <property type="nucleotide sequence ID" value="NC_006300.1"/>
</dbReference>
<dbReference type="SMR" id="Q65VB8"/>
<dbReference type="STRING" id="221988.MS0485"/>
<dbReference type="KEGG" id="msu:MS0485"/>
<dbReference type="eggNOG" id="COG0593">
    <property type="taxonomic scope" value="Bacteria"/>
</dbReference>
<dbReference type="HOGENOM" id="CLU_026910_0_1_6"/>
<dbReference type="OrthoDB" id="9807019at2"/>
<dbReference type="Proteomes" id="UP000000607">
    <property type="component" value="Chromosome"/>
</dbReference>
<dbReference type="GO" id="GO:0005737">
    <property type="term" value="C:cytoplasm"/>
    <property type="evidence" value="ECO:0007669"/>
    <property type="project" value="UniProtKB-SubCell"/>
</dbReference>
<dbReference type="GO" id="GO:0005886">
    <property type="term" value="C:plasma membrane"/>
    <property type="evidence" value="ECO:0007669"/>
    <property type="project" value="TreeGrafter"/>
</dbReference>
<dbReference type="GO" id="GO:0005524">
    <property type="term" value="F:ATP binding"/>
    <property type="evidence" value="ECO:0007669"/>
    <property type="project" value="UniProtKB-UniRule"/>
</dbReference>
<dbReference type="GO" id="GO:0016887">
    <property type="term" value="F:ATP hydrolysis activity"/>
    <property type="evidence" value="ECO:0007669"/>
    <property type="project" value="InterPro"/>
</dbReference>
<dbReference type="GO" id="GO:0003688">
    <property type="term" value="F:DNA replication origin binding"/>
    <property type="evidence" value="ECO:0007669"/>
    <property type="project" value="UniProtKB-UniRule"/>
</dbReference>
<dbReference type="GO" id="GO:0008289">
    <property type="term" value="F:lipid binding"/>
    <property type="evidence" value="ECO:0007669"/>
    <property type="project" value="UniProtKB-KW"/>
</dbReference>
<dbReference type="GO" id="GO:0006270">
    <property type="term" value="P:DNA replication initiation"/>
    <property type="evidence" value="ECO:0007669"/>
    <property type="project" value="UniProtKB-UniRule"/>
</dbReference>
<dbReference type="GO" id="GO:0006275">
    <property type="term" value="P:regulation of DNA replication"/>
    <property type="evidence" value="ECO:0007669"/>
    <property type="project" value="UniProtKB-UniRule"/>
</dbReference>
<dbReference type="CDD" id="cd00009">
    <property type="entry name" value="AAA"/>
    <property type="match status" value="1"/>
</dbReference>
<dbReference type="CDD" id="cd06571">
    <property type="entry name" value="Bac_DnaA_C"/>
    <property type="match status" value="1"/>
</dbReference>
<dbReference type="FunFam" id="1.10.1750.10:FF:000001">
    <property type="entry name" value="Chromosomal replication initiator protein DnaA"/>
    <property type="match status" value="1"/>
</dbReference>
<dbReference type="FunFam" id="1.10.8.60:FF:000003">
    <property type="entry name" value="Chromosomal replication initiator protein DnaA"/>
    <property type="match status" value="1"/>
</dbReference>
<dbReference type="FunFam" id="3.40.50.300:FF:000103">
    <property type="entry name" value="Chromosomal replication initiator protein DnaA"/>
    <property type="match status" value="1"/>
</dbReference>
<dbReference type="Gene3D" id="1.10.1750.10">
    <property type="match status" value="1"/>
</dbReference>
<dbReference type="Gene3D" id="1.10.8.60">
    <property type="match status" value="1"/>
</dbReference>
<dbReference type="Gene3D" id="3.30.300.180">
    <property type="match status" value="1"/>
</dbReference>
<dbReference type="Gene3D" id="3.40.50.300">
    <property type="entry name" value="P-loop containing nucleotide triphosphate hydrolases"/>
    <property type="match status" value="1"/>
</dbReference>
<dbReference type="HAMAP" id="MF_00377">
    <property type="entry name" value="DnaA_bact"/>
    <property type="match status" value="1"/>
</dbReference>
<dbReference type="InterPro" id="IPR003593">
    <property type="entry name" value="AAA+_ATPase"/>
</dbReference>
<dbReference type="InterPro" id="IPR001957">
    <property type="entry name" value="Chromosome_initiator_DnaA"/>
</dbReference>
<dbReference type="InterPro" id="IPR020591">
    <property type="entry name" value="Chromosome_initiator_DnaA-like"/>
</dbReference>
<dbReference type="InterPro" id="IPR018312">
    <property type="entry name" value="Chromosome_initiator_DnaA_CS"/>
</dbReference>
<dbReference type="InterPro" id="IPR013159">
    <property type="entry name" value="DnaA_C"/>
</dbReference>
<dbReference type="InterPro" id="IPR013317">
    <property type="entry name" value="DnaA_dom"/>
</dbReference>
<dbReference type="InterPro" id="IPR024633">
    <property type="entry name" value="DnaA_N_dom"/>
</dbReference>
<dbReference type="InterPro" id="IPR038454">
    <property type="entry name" value="DnaA_N_sf"/>
</dbReference>
<dbReference type="InterPro" id="IPR027417">
    <property type="entry name" value="P-loop_NTPase"/>
</dbReference>
<dbReference type="InterPro" id="IPR010921">
    <property type="entry name" value="Trp_repressor/repl_initiator"/>
</dbReference>
<dbReference type="NCBIfam" id="TIGR00362">
    <property type="entry name" value="DnaA"/>
    <property type="match status" value="1"/>
</dbReference>
<dbReference type="PANTHER" id="PTHR30050">
    <property type="entry name" value="CHROMOSOMAL REPLICATION INITIATOR PROTEIN DNAA"/>
    <property type="match status" value="1"/>
</dbReference>
<dbReference type="PANTHER" id="PTHR30050:SF2">
    <property type="entry name" value="CHROMOSOMAL REPLICATION INITIATOR PROTEIN DNAA"/>
    <property type="match status" value="1"/>
</dbReference>
<dbReference type="Pfam" id="PF00308">
    <property type="entry name" value="Bac_DnaA"/>
    <property type="match status" value="1"/>
</dbReference>
<dbReference type="Pfam" id="PF08299">
    <property type="entry name" value="Bac_DnaA_C"/>
    <property type="match status" value="1"/>
</dbReference>
<dbReference type="Pfam" id="PF11638">
    <property type="entry name" value="DnaA_N"/>
    <property type="match status" value="1"/>
</dbReference>
<dbReference type="PRINTS" id="PR00051">
    <property type="entry name" value="DNAA"/>
</dbReference>
<dbReference type="SMART" id="SM00382">
    <property type="entry name" value="AAA"/>
    <property type="match status" value="1"/>
</dbReference>
<dbReference type="SMART" id="SM00760">
    <property type="entry name" value="Bac_DnaA_C"/>
    <property type="match status" value="1"/>
</dbReference>
<dbReference type="SUPFAM" id="SSF52540">
    <property type="entry name" value="P-loop containing nucleoside triphosphate hydrolases"/>
    <property type="match status" value="1"/>
</dbReference>
<dbReference type="SUPFAM" id="SSF48295">
    <property type="entry name" value="TrpR-like"/>
    <property type="match status" value="1"/>
</dbReference>
<dbReference type="PROSITE" id="PS01008">
    <property type="entry name" value="DNAA"/>
    <property type="match status" value="1"/>
</dbReference>
<gene>
    <name evidence="1" type="primary">dnaA</name>
    <name type="ordered locus">MS0485</name>
</gene>